<proteinExistence type="inferred from homology"/>
<name>XERC_BIFLD</name>
<keyword id="KW-0131">Cell cycle</keyword>
<keyword id="KW-0132">Cell division</keyword>
<keyword id="KW-0159">Chromosome partition</keyword>
<keyword id="KW-0963">Cytoplasm</keyword>
<keyword id="KW-0229">DNA integration</keyword>
<keyword id="KW-0233">DNA recombination</keyword>
<keyword id="KW-0238">DNA-binding</keyword>
<evidence type="ECO:0000255" key="1">
    <source>
        <dbReference type="HAMAP-Rule" id="MF_01808"/>
    </source>
</evidence>
<evidence type="ECO:0000255" key="2">
    <source>
        <dbReference type="PROSITE-ProRule" id="PRU01246"/>
    </source>
</evidence>
<evidence type="ECO:0000255" key="3">
    <source>
        <dbReference type="PROSITE-ProRule" id="PRU01248"/>
    </source>
</evidence>
<evidence type="ECO:0000256" key="4">
    <source>
        <dbReference type="SAM" id="MobiDB-lite"/>
    </source>
</evidence>
<sequence length="355" mass="38462">MSSTQFDGDIDSFVSYLKSNRGLSANTLKAYRADLTACLHLFELRGVTDLNEITLDDLRSWMAVESRDHARSSMARKTVAVRGFFAWAYEHGLTTTDPAATLMTPSIPSTLPAVLTESQAEQLLDVAEHAVATNQYKDDGGAAAAPGSGKAAGKTADKSADTVNRSEAPARADKRDNARVTAESQRNAAILELLYATGIRVAELVSMDIADIDFSNRTIKVTGKGNKQRVVPFGLPAQRALETWLEQGRPVLARTATDAVKSRAANALFLGARGGRIDQRIARDIVHRAAREAGVPDISPHALRHSAATHMLDGGADLREVQEMLGHSSLKTTQRYTHVSIEQLKNRYGQAFPRA</sequence>
<reference key="1">
    <citation type="journal article" date="2008" name="BMC Genomics">
        <title>Comparative genomic analysis of the gut bacterium Bifidobacterium longum reveals loci susceptible to deletion during pure culture growth.</title>
        <authorList>
            <person name="Lee J.H."/>
            <person name="Karamychev V.N."/>
            <person name="Kozyavkin S.A."/>
            <person name="Mills D."/>
            <person name="Pavlov A.R."/>
            <person name="Pavlova N.V."/>
            <person name="Polouchine N.N."/>
            <person name="Richardson P.M."/>
            <person name="Shakhova V.V."/>
            <person name="Slesarev A.I."/>
            <person name="Weimer B."/>
            <person name="O'Sullivan D.J."/>
        </authorList>
    </citation>
    <scope>NUCLEOTIDE SEQUENCE [LARGE SCALE GENOMIC DNA]</scope>
    <source>
        <strain>DJO10A</strain>
    </source>
</reference>
<protein>
    <recommendedName>
        <fullName evidence="1">Tyrosine recombinase XerC</fullName>
    </recommendedName>
</protein>
<dbReference type="EMBL" id="CP000605">
    <property type="protein sequence ID" value="ACD97697.1"/>
    <property type="molecule type" value="Genomic_DNA"/>
</dbReference>
<dbReference type="RefSeq" id="WP_008783120.1">
    <property type="nucleotide sequence ID" value="NZ_AABM02000003.1"/>
</dbReference>
<dbReference type="SMR" id="B3DQV1"/>
<dbReference type="KEGG" id="blj:BLD_0251"/>
<dbReference type="HOGENOM" id="CLU_027562_9_0_11"/>
<dbReference type="Proteomes" id="UP000002419">
    <property type="component" value="Chromosome"/>
</dbReference>
<dbReference type="GO" id="GO:0005737">
    <property type="term" value="C:cytoplasm"/>
    <property type="evidence" value="ECO:0007669"/>
    <property type="project" value="UniProtKB-SubCell"/>
</dbReference>
<dbReference type="GO" id="GO:0003677">
    <property type="term" value="F:DNA binding"/>
    <property type="evidence" value="ECO:0007669"/>
    <property type="project" value="UniProtKB-KW"/>
</dbReference>
<dbReference type="GO" id="GO:0009037">
    <property type="term" value="F:tyrosine-based site-specific recombinase activity"/>
    <property type="evidence" value="ECO:0007669"/>
    <property type="project" value="UniProtKB-UniRule"/>
</dbReference>
<dbReference type="GO" id="GO:0051301">
    <property type="term" value="P:cell division"/>
    <property type="evidence" value="ECO:0007669"/>
    <property type="project" value="UniProtKB-KW"/>
</dbReference>
<dbReference type="GO" id="GO:0007059">
    <property type="term" value="P:chromosome segregation"/>
    <property type="evidence" value="ECO:0007669"/>
    <property type="project" value="UniProtKB-UniRule"/>
</dbReference>
<dbReference type="GO" id="GO:0006313">
    <property type="term" value="P:DNA transposition"/>
    <property type="evidence" value="ECO:0007669"/>
    <property type="project" value="UniProtKB-UniRule"/>
</dbReference>
<dbReference type="CDD" id="cd00798">
    <property type="entry name" value="INT_XerDC_C"/>
    <property type="match status" value="1"/>
</dbReference>
<dbReference type="Gene3D" id="1.10.150.130">
    <property type="match status" value="1"/>
</dbReference>
<dbReference type="Gene3D" id="1.10.443.10">
    <property type="entry name" value="Intergrase catalytic core"/>
    <property type="match status" value="1"/>
</dbReference>
<dbReference type="HAMAP" id="MF_01808">
    <property type="entry name" value="Recomb_XerC_XerD"/>
    <property type="match status" value="1"/>
</dbReference>
<dbReference type="InterPro" id="IPR044068">
    <property type="entry name" value="CB"/>
</dbReference>
<dbReference type="InterPro" id="IPR011010">
    <property type="entry name" value="DNA_brk_join_enz"/>
</dbReference>
<dbReference type="InterPro" id="IPR013762">
    <property type="entry name" value="Integrase-like_cat_sf"/>
</dbReference>
<dbReference type="InterPro" id="IPR002104">
    <property type="entry name" value="Integrase_catalytic"/>
</dbReference>
<dbReference type="InterPro" id="IPR010998">
    <property type="entry name" value="Integrase_recombinase_N"/>
</dbReference>
<dbReference type="InterPro" id="IPR004107">
    <property type="entry name" value="Integrase_SAM-like_N"/>
</dbReference>
<dbReference type="InterPro" id="IPR023009">
    <property type="entry name" value="Tyrosine_recombinase_XerC/XerD"/>
</dbReference>
<dbReference type="InterPro" id="IPR050090">
    <property type="entry name" value="Tyrosine_recombinase_XerCD"/>
</dbReference>
<dbReference type="PANTHER" id="PTHR30349">
    <property type="entry name" value="PHAGE INTEGRASE-RELATED"/>
    <property type="match status" value="1"/>
</dbReference>
<dbReference type="PANTHER" id="PTHR30349:SF77">
    <property type="entry name" value="TYROSINE RECOMBINASE XERC"/>
    <property type="match status" value="1"/>
</dbReference>
<dbReference type="Pfam" id="PF02899">
    <property type="entry name" value="Phage_int_SAM_1"/>
    <property type="match status" value="1"/>
</dbReference>
<dbReference type="Pfam" id="PF00589">
    <property type="entry name" value="Phage_integrase"/>
    <property type="match status" value="1"/>
</dbReference>
<dbReference type="SUPFAM" id="SSF56349">
    <property type="entry name" value="DNA breaking-rejoining enzymes"/>
    <property type="match status" value="1"/>
</dbReference>
<dbReference type="PROSITE" id="PS51900">
    <property type="entry name" value="CB"/>
    <property type="match status" value="1"/>
</dbReference>
<dbReference type="PROSITE" id="PS51898">
    <property type="entry name" value="TYR_RECOMBINASE"/>
    <property type="match status" value="1"/>
</dbReference>
<accession>B3DQV1</accession>
<organism>
    <name type="scientific">Bifidobacterium longum (strain DJO10A)</name>
    <dbReference type="NCBI Taxonomy" id="205913"/>
    <lineage>
        <taxon>Bacteria</taxon>
        <taxon>Bacillati</taxon>
        <taxon>Actinomycetota</taxon>
        <taxon>Actinomycetes</taxon>
        <taxon>Bifidobacteriales</taxon>
        <taxon>Bifidobacteriaceae</taxon>
        <taxon>Bifidobacterium</taxon>
    </lineage>
</organism>
<comment type="function">
    <text evidence="1">Site-specific tyrosine recombinase, which acts by catalyzing the cutting and rejoining of the recombining DNA molecules. The XerC-XerD complex is essential to convert dimers of the bacterial chromosome into monomers to permit their segregation at cell division. It also contributes to the segregational stability of plasmids.</text>
</comment>
<comment type="subunit">
    <text evidence="1">Forms a cyclic heterotetrameric complex composed of two molecules of XerC and two molecules of XerD.</text>
</comment>
<comment type="subcellular location">
    <subcellularLocation>
        <location evidence="1">Cytoplasm</location>
    </subcellularLocation>
</comment>
<comment type="similarity">
    <text evidence="1">Belongs to the 'phage' integrase family. XerC subfamily.</text>
</comment>
<feature type="chain" id="PRO_1000187582" description="Tyrosine recombinase XerC">
    <location>
        <begin position="1"/>
        <end position="355"/>
    </location>
</feature>
<feature type="domain" description="Core-binding (CB)" evidence="3">
    <location>
        <begin position="4"/>
        <end position="89"/>
    </location>
</feature>
<feature type="domain" description="Tyr recombinase" evidence="2">
    <location>
        <begin position="158"/>
        <end position="349"/>
    </location>
</feature>
<feature type="region of interest" description="Disordered" evidence="4">
    <location>
        <begin position="137"/>
        <end position="181"/>
    </location>
</feature>
<feature type="compositionally biased region" description="Low complexity" evidence="4">
    <location>
        <begin position="141"/>
        <end position="154"/>
    </location>
</feature>
<feature type="compositionally biased region" description="Basic and acidic residues" evidence="4">
    <location>
        <begin position="168"/>
        <end position="178"/>
    </location>
</feature>
<feature type="active site" evidence="1">
    <location>
        <position position="200"/>
    </location>
</feature>
<feature type="active site" evidence="1">
    <location>
        <position position="224"/>
    </location>
</feature>
<feature type="active site" evidence="1">
    <location>
        <position position="301"/>
    </location>
</feature>
<feature type="active site" evidence="1">
    <location>
        <position position="304"/>
    </location>
</feature>
<feature type="active site" evidence="1">
    <location>
        <position position="327"/>
    </location>
</feature>
<feature type="active site" description="O-(3'-phospho-DNA)-tyrosine intermediate" evidence="1">
    <location>
        <position position="336"/>
    </location>
</feature>
<gene>
    <name evidence="1" type="primary">xerC</name>
    <name type="ordered locus">BLD_0251</name>
</gene>